<feature type="signal peptide" evidence="2">
    <location>
        <begin position="1"/>
        <end position="27"/>
    </location>
</feature>
<feature type="chain" id="PRO_0000430073" description="Protein MATERNALLY EXPRESSED GENE 1">
    <location>
        <begin position="28"/>
        <end position="88"/>
    </location>
</feature>
<feature type="glycosylation site" description="N-linked (GlcNAc...) asparagine" evidence="2">
    <location>
        <position position="36"/>
    </location>
</feature>
<feature type="disulfide bond" evidence="1">
    <location>
        <begin position="65"/>
        <end position="87"/>
    </location>
</feature>
<feature type="disulfide bond" evidence="1">
    <location>
        <begin position="68"/>
        <end position="76"/>
    </location>
</feature>
<feature type="splice variant" id="VSP_055463" description="In isoform 2." evidence="5">
    <original>GNGHVTDDVNVSAP</original>
    <variation>G</variation>
    <location>
        <begin position="27"/>
        <end position="40"/>
    </location>
</feature>
<evidence type="ECO:0000250" key="1"/>
<evidence type="ECO:0000255" key="2"/>
<evidence type="ECO:0000269" key="3">
    <source>
    </source>
</evidence>
<evidence type="ECO:0000269" key="4">
    <source>
    </source>
</evidence>
<evidence type="ECO:0000303" key="5">
    <source>
    </source>
</evidence>
<evidence type="ECO:0000305" key="6"/>
<name>MEG1_MAIZE</name>
<reference key="1">
    <citation type="journal article" date="2004" name="Plant Cell">
        <title>maternally expressed gene1 is a novel maize endosperm transfer cell-specific gene with a maternal parent-of-origin pattern of expression.</title>
        <authorList>
            <person name="Gutierrez-Marcos J.F."/>
            <person name="Costa L.M."/>
            <person name="Biderre-Petit C."/>
            <person name="Khbaya B."/>
            <person name="O'Sullivan D.M."/>
            <person name="Wormald M."/>
            <person name="Perez P."/>
            <person name="Dickinson H.G."/>
        </authorList>
    </citation>
    <scope>NUCLEOTIDE SEQUENCE [GENOMIC DNA / MRNA] (ISOFORM 2)</scope>
    <scope>TISSUE SPECIFICITY</scope>
    <scope>DEVELOPMENTAL STAGE</scope>
    <scope>3D-STRUCTURE MODELING</scope>
    <scope>GLYCOSYLATION</scope>
    <scope>SUBCELLULAR LOCATION</scope>
    <scope>GENE FAMILY</scope>
    <scope>NOMENCLATURE</scope>
</reference>
<reference key="2">
    <citation type="journal article" date="2009" name="Science">
        <title>The B73 maize genome: complexity, diversity, and dynamics.</title>
        <authorList>
            <person name="Schnable P.S."/>
            <person name="Ware D."/>
            <person name="Fulton R.S."/>
            <person name="Stein J.C."/>
            <person name="Wei F."/>
            <person name="Pasternak S."/>
            <person name="Liang C."/>
            <person name="Zhang J."/>
            <person name="Fulton L."/>
            <person name="Graves T.A."/>
            <person name="Minx P."/>
            <person name="Reily A.D."/>
            <person name="Courtney L."/>
            <person name="Kruchowski S.S."/>
            <person name="Tomlinson C."/>
            <person name="Strong C."/>
            <person name="Delehaunty K."/>
            <person name="Fronick C."/>
            <person name="Courtney B."/>
            <person name="Rock S.M."/>
            <person name="Belter E."/>
            <person name="Du F."/>
            <person name="Kim K."/>
            <person name="Abbott R.M."/>
            <person name="Cotton M."/>
            <person name="Levy A."/>
            <person name="Marchetto P."/>
            <person name="Ochoa K."/>
            <person name="Jackson S.M."/>
            <person name="Gillam B."/>
            <person name="Chen W."/>
            <person name="Yan L."/>
            <person name="Higginbotham J."/>
            <person name="Cardenas M."/>
            <person name="Waligorski J."/>
            <person name="Applebaum E."/>
            <person name="Phelps L."/>
            <person name="Falcone J."/>
            <person name="Kanchi K."/>
            <person name="Thane T."/>
            <person name="Scimone A."/>
            <person name="Thane N."/>
            <person name="Henke J."/>
            <person name="Wang T."/>
            <person name="Ruppert J."/>
            <person name="Shah N."/>
            <person name="Rotter K."/>
            <person name="Hodges J."/>
            <person name="Ingenthron E."/>
            <person name="Cordes M."/>
            <person name="Kohlberg S."/>
            <person name="Sgro J."/>
            <person name="Delgado B."/>
            <person name="Mead K."/>
            <person name="Chinwalla A."/>
            <person name="Leonard S."/>
            <person name="Crouse K."/>
            <person name="Collura K."/>
            <person name="Kudrna D."/>
            <person name="Currie J."/>
            <person name="He R."/>
            <person name="Angelova A."/>
            <person name="Rajasekar S."/>
            <person name="Mueller T."/>
            <person name="Lomeli R."/>
            <person name="Scara G."/>
            <person name="Ko A."/>
            <person name="Delaney K."/>
            <person name="Wissotski M."/>
            <person name="Lopez G."/>
            <person name="Campos D."/>
            <person name="Braidotti M."/>
            <person name="Ashley E."/>
            <person name="Golser W."/>
            <person name="Kim H."/>
            <person name="Lee S."/>
            <person name="Lin J."/>
            <person name="Dujmic Z."/>
            <person name="Kim W."/>
            <person name="Talag J."/>
            <person name="Zuccolo A."/>
            <person name="Fan C."/>
            <person name="Sebastian A."/>
            <person name="Kramer M."/>
            <person name="Spiegel L."/>
            <person name="Nascimento L."/>
            <person name="Zutavern T."/>
            <person name="Miller B."/>
            <person name="Ambroise C."/>
            <person name="Muller S."/>
            <person name="Spooner W."/>
            <person name="Narechania A."/>
            <person name="Ren L."/>
            <person name="Wei S."/>
            <person name="Kumari S."/>
            <person name="Faga B."/>
            <person name="Levy M.J."/>
            <person name="McMahan L."/>
            <person name="Van Buren P."/>
            <person name="Vaughn M.W."/>
            <person name="Ying K."/>
            <person name="Yeh C.-T."/>
            <person name="Emrich S.J."/>
            <person name="Jia Y."/>
            <person name="Kalyanaraman A."/>
            <person name="Hsia A.-P."/>
            <person name="Barbazuk W.B."/>
            <person name="Baucom R.S."/>
            <person name="Brutnell T.P."/>
            <person name="Carpita N.C."/>
            <person name="Chaparro C."/>
            <person name="Chia J.-M."/>
            <person name="Deragon J.-M."/>
            <person name="Estill J.C."/>
            <person name="Fu Y."/>
            <person name="Jeddeloh J.A."/>
            <person name="Han Y."/>
            <person name="Lee H."/>
            <person name="Li P."/>
            <person name="Lisch D.R."/>
            <person name="Liu S."/>
            <person name="Liu Z."/>
            <person name="Nagel D.H."/>
            <person name="McCann M.C."/>
            <person name="SanMiguel P."/>
            <person name="Myers A.M."/>
            <person name="Nettleton D."/>
            <person name="Nguyen J."/>
            <person name="Penning B.W."/>
            <person name="Ponnala L."/>
            <person name="Schneider K.L."/>
            <person name="Schwartz D.C."/>
            <person name="Sharma A."/>
            <person name="Soderlund C."/>
            <person name="Springer N.M."/>
            <person name="Sun Q."/>
            <person name="Wang H."/>
            <person name="Waterman M."/>
            <person name="Westerman R."/>
            <person name="Wolfgruber T.K."/>
            <person name="Yang L."/>
            <person name="Yu Y."/>
            <person name="Zhang L."/>
            <person name="Zhou S."/>
            <person name="Zhu Q."/>
            <person name="Bennetzen J.L."/>
            <person name="Dawe R.K."/>
            <person name="Jiang J."/>
            <person name="Jiang N."/>
            <person name="Presting G.G."/>
            <person name="Wessler S.R."/>
            <person name="Aluru S."/>
            <person name="Martienssen R.A."/>
            <person name="Clifton S.W."/>
            <person name="McCombie W.R."/>
            <person name="Wing R.A."/>
            <person name="Wilson R.K."/>
        </authorList>
    </citation>
    <scope>NUCLEOTIDE SEQUENCE [LARGE SCALE GENOMIC DNA]</scope>
    <source>
        <strain>cv. B73</strain>
    </source>
</reference>
<reference key="3">
    <citation type="journal article" date="2009" name="Plant Mol. Biol.">
        <title>Insights into corn genes derived from large-scale cDNA sequencing.</title>
        <authorList>
            <person name="Alexandrov N.N."/>
            <person name="Brover V.V."/>
            <person name="Freidin S."/>
            <person name="Troukhan M.E."/>
            <person name="Tatarinova T.V."/>
            <person name="Zhang H."/>
            <person name="Swaller T.J."/>
            <person name="Lu Y.-P."/>
            <person name="Bouck J."/>
            <person name="Flavell R.B."/>
            <person name="Feldmann K.A."/>
        </authorList>
    </citation>
    <scope>NUCLEOTIDE SEQUENCE [LARGE SCALE MRNA] (ISOFORM 1)</scope>
</reference>
<reference key="4">
    <citation type="journal article" date="2012" name="Curr. Biol.">
        <title>Maternal control of nutrient allocation in plant seeds by genomic imprinting.</title>
        <authorList>
            <person name="Costa L.M."/>
            <person name="Yuan J."/>
            <person name="Rouster J."/>
            <person name="Paul W."/>
            <person name="Dickinson H."/>
            <person name="Gutierrez-Marcos J.F."/>
        </authorList>
    </citation>
    <scope>FUNCTION</scope>
    <scope>SUBCELLULAR LOCATION</scope>
</reference>
<organism>
    <name type="scientific">Zea mays</name>
    <name type="common">Maize</name>
    <dbReference type="NCBI Taxonomy" id="4577"/>
    <lineage>
        <taxon>Eukaryota</taxon>
        <taxon>Viridiplantae</taxon>
        <taxon>Streptophyta</taxon>
        <taxon>Embryophyta</taxon>
        <taxon>Tracheophyta</taxon>
        <taxon>Spermatophyta</taxon>
        <taxon>Magnoliopsida</taxon>
        <taxon>Liliopsida</taxon>
        <taxon>Poales</taxon>
        <taxon>Poaceae</taxon>
        <taxon>PACMAD clade</taxon>
        <taxon>Panicoideae</taxon>
        <taxon>Andropogonodae</taxon>
        <taxon>Andropogoneae</taxon>
        <taxon>Tripsacinae</taxon>
        <taxon>Zea</taxon>
    </lineage>
</organism>
<sequence length="88" mass="9810">MEYKKRVDALVFFSLLLLGYFAAHAHGNGHVTDDVNVSAPAEEGILREKRAQCAQGFLPCKDNKCYCCIGGRTHDCYYTMAQCSHACF</sequence>
<accession>Q6JB15</accession>
<accession>B6SYN5</accession>
<proteinExistence type="evidence at protein level"/>
<comment type="function">
    <text evidence="4">Regulates maternal nutrient uptake, sucrose partitioning, and seed biomass yield. Necessary and sufficient for the establishment and differentiation of the endosperm nutrient transfer cells located at the mother:seed interface. Exclusive expression of the maternal allele at the early stages of endosperm development. The maternal allele is hypomethylated. At later stages, expression becomes biallelic. Regulated by the transcription factor MRP1.</text>
</comment>
<comment type="subcellular location">
    <subcellularLocation>
        <location>Secreted</location>
        <location>Cell wall</location>
    </subcellularLocation>
    <subcellularLocation>
        <location>Cell membrane</location>
    </subcellularLocation>
    <subcellularLocation>
        <location>Secreted</location>
        <location>Extracellular space</location>
        <location>Extracellular matrix</location>
    </subcellularLocation>
</comment>
<comment type="alternative products">
    <event type="alternative splicing"/>
    <isoform>
        <id>Q6JB15-1</id>
        <name>1</name>
        <sequence type="displayed"/>
    </isoform>
    <isoform>
        <id>Q6JB15-2</id>
        <name>2</name>
        <sequence type="described" ref="VSP_055463"/>
    </isoform>
</comment>
<comment type="tissue specificity">
    <text evidence="3">Expressed exclusively in endosperm. Found in basal endosperm transfer cells.</text>
</comment>
<comment type="developmental stage">
    <text evidence="3">Expressed from 4 to 20 days after pollination.</text>
</comment>
<comment type="PTM">
    <text evidence="3">Glycosylated.</text>
</comment>
<comment type="similarity">
    <text evidence="6">Belongs to the MEG family.</text>
</comment>
<gene>
    <name type="primary">MEG1</name>
    <name evidence="6" type="ORF">GRMZM2G354335</name>
</gene>
<protein>
    <recommendedName>
        <fullName>Protein MATERNALLY EXPRESSED GENE 1</fullName>
    </recommendedName>
</protein>
<keyword id="KW-0025">Alternative splicing</keyword>
<keyword id="KW-1003">Cell membrane</keyword>
<keyword id="KW-0134">Cell wall</keyword>
<keyword id="KW-0217">Developmental protein</keyword>
<keyword id="KW-1015">Disulfide bond</keyword>
<keyword id="KW-0272">Extracellular matrix</keyword>
<keyword id="KW-0325">Glycoprotein</keyword>
<keyword id="KW-0472">Membrane</keyword>
<keyword id="KW-1185">Reference proteome</keyword>
<keyword id="KW-0964">Secreted</keyword>
<keyword id="KW-0732">Signal</keyword>
<dbReference type="EMBL" id="AY536121">
    <property type="protein sequence ID" value="AAT09810.1"/>
    <property type="molecule type" value="mRNA"/>
</dbReference>
<dbReference type="EMBL" id="AY536120">
    <property type="protein sequence ID" value="AAT36287.1"/>
    <property type="molecule type" value="Genomic_DNA"/>
</dbReference>
<dbReference type="EMBL" id="AC199699">
    <property type="status" value="NOT_ANNOTATED_CDS"/>
    <property type="molecule type" value="Genomic_DNA"/>
</dbReference>
<dbReference type="EMBL" id="EU957850">
    <property type="protein sequence ID" value="ACG29968.1"/>
    <property type="molecule type" value="mRNA"/>
</dbReference>
<dbReference type="RefSeq" id="XP_008652138.1">
    <property type="nucleotide sequence ID" value="XM_008653916.1"/>
</dbReference>
<dbReference type="SMR" id="Q6JB15"/>
<dbReference type="STRING" id="4577.Q6JB15"/>
<dbReference type="GlyCosmos" id="Q6JB15">
    <property type="glycosylation" value="1 site, No reported glycans"/>
</dbReference>
<dbReference type="PaxDb" id="4577-GRMZM2G354335_P01"/>
<dbReference type="EnsemblPlants" id="Zm00001eb302080_T001">
    <molecule id="Q6JB15-1"/>
    <property type="protein sequence ID" value="Zm00001eb302080_P001"/>
    <property type="gene ID" value="Zm00001eb302080"/>
</dbReference>
<dbReference type="Gramene" id="Zm00001eb302080_T001">
    <molecule id="Q6JB15-1"/>
    <property type="protein sequence ID" value="Zm00001eb302080_P001"/>
    <property type="gene ID" value="Zm00001eb302080"/>
</dbReference>
<dbReference type="KEGG" id="zma:103632056"/>
<dbReference type="InParanoid" id="Q6JB15"/>
<dbReference type="OrthoDB" id="680835at2759"/>
<dbReference type="Proteomes" id="UP000007305">
    <property type="component" value="Chromosome 7"/>
</dbReference>
<dbReference type="ExpressionAtlas" id="Q6JB15">
    <property type="expression patterns" value="baseline and differential"/>
</dbReference>
<dbReference type="GO" id="GO:0005576">
    <property type="term" value="C:extracellular region"/>
    <property type="evidence" value="ECO:0007669"/>
    <property type="project" value="UniProtKB-KW"/>
</dbReference>
<dbReference type="GO" id="GO:0005886">
    <property type="term" value="C:plasma membrane"/>
    <property type="evidence" value="ECO:0007669"/>
    <property type="project" value="UniProtKB-SubCell"/>
</dbReference>
<dbReference type="InterPro" id="IPR056205">
    <property type="entry name" value="Meg"/>
</dbReference>
<dbReference type="Pfam" id="PF24153">
    <property type="entry name" value="Meg"/>
    <property type="match status" value="1"/>
</dbReference>